<keyword id="KW-0240">DNA-directed RNA polymerase</keyword>
<keyword id="KW-0460">Magnesium</keyword>
<keyword id="KW-0479">Metal-binding</keyword>
<keyword id="KW-0548">Nucleotidyltransferase</keyword>
<keyword id="KW-0804">Transcription</keyword>
<keyword id="KW-0808">Transferase</keyword>
<keyword id="KW-0862">Zinc</keyword>
<organism>
    <name type="scientific">Mesomycoplasma hyopneumoniae (strain J / ATCC 25934 / NCTC 10110)</name>
    <name type="common">Mycoplasma hyopneumoniae</name>
    <dbReference type="NCBI Taxonomy" id="262719"/>
    <lineage>
        <taxon>Bacteria</taxon>
        <taxon>Bacillati</taxon>
        <taxon>Mycoplasmatota</taxon>
        <taxon>Mycoplasmoidales</taxon>
        <taxon>Metamycoplasmataceae</taxon>
        <taxon>Mesomycoplasma</taxon>
    </lineage>
</organism>
<name>RPOC_MESHJ</name>
<sequence>MNTKVSRQYAKISENSIQKISLALATPEDVLEWSRGEVHRPETINYKTFKPERGGLFDELIFGPLVDYKCSVCGRKYRKSNENQLCIATKECKIRGSRILSKMARRYSMGHIALNAPILHFWFFKIDHSIIAKLLGLKVFEGNSKVPTTITKAAIENLIYYKSHIVLETGGLKSLEQNKIIDISEAGLIYKNALIEIIEFYPPGSEEHNALAESISELADVTSSKIGREYGVDYYELNEIIEEFSSARIATGALAIEYLLDKIDLRAEKAAVEAELAGVQKQIYKNKKIILKNQKRDKLYKRLQVINAFINSGQDPKMMIIRNLPVIPADLRPLVQLDGSRHSTSDCNELYRRIIIRNNRLKRWKAAHAPVIIIQNEMRMLQEAVDALIDNQKKSTNQVTTKEGRPLKSISDALTGKKGRFRQNLLGKRVDYSGRSVIVVGPKLKMHQAGLPRKMAAVLFEPWIIRNLIQEKKVGSIKMARKMIEEENPIIWPHVAKVIQNKPIILNRAPTLHRLSIQAFEPVLVRAKAIQLHPLVTAGFNADFDGDQMAVHIPISPEAIRETQELMFADKNILGPKDGEPIVNPSQDMVLGLYYLSQEKAGAKGEGSFFSTYEAMLKAYEFRSVELHARVVLPFEQVKPFIAKTMRGHLISTVGKFILNNIFPANFPFIFDDNVDELELNYPSQIKKYVLPYGTNFREYIQNLKVNEPLNKKAIAKIVRQIFDTYDGLLAKEDIATVIDQLDFGNYQNCVLRYEKLRDYKKQKLPVPHLSKLSEFTIFEYSQLYKQLQQNGPVESYRVLEDHEKAELLEKIWFKYNNMVCSILDKIKDLGFHYSTLSGTSIAISDIKMAPKKHEFIKEGENYINKLNTFYAKGLITDDERYVLAIAKWTQIKNDIQEDLNQSIKDDNQNSLVMMMKSGARGNISNFVQLAGMRGLMANNVKALKVDAENERVVRSIVEVPVKSSFLEGLTSFEFYSSTHGARKGLTDTALNTAKSGYLTRRLVDVAQNIVVVAEDCFSDFGFVVKDIIDTKTNTIIVPLLERIEGRFLNKDVYDSRGIKLASAGTMVDLQTAKKIVAAGIKKVEIRSILSCHIKNSVCKKCYGKDLATNRLVSIGEAVGIIAAQSIGEPGTQLTMRTFHTGGVANVEDITGGFTRLIELIDSHEHPWGKPAKISPYYGIITKISDLAEKNAANKGFLITIEYKTSKNEKAEHIIRIEQSQKLRVKVGDKVIPGQKLVEGPIILKELLAVSDARTLQNYLLKEIQRIYRMQGISISDKYIEIIIRQMLSKVQIIENGDSNFFIGSIVDISDYQEVNGQLISQNKNPAFGNVIVKGAKQIPLLSNSFLAAASYQETSKILVHSVISSQIDKLEGLKENIIVGHKIPAGTNSNYEPKSKFDIRNPLSFFMKNNR</sequence>
<comment type="function">
    <text evidence="1">DNA-dependent RNA polymerase catalyzes the transcription of DNA into RNA using the four ribonucleoside triphosphates as substrates.</text>
</comment>
<comment type="catalytic activity">
    <reaction evidence="1">
        <text>RNA(n) + a ribonucleoside 5'-triphosphate = RNA(n+1) + diphosphate</text>
        <dbReference type="Rhea" id="RHEA:21248"/>
        <dbReference type="Rhea" id="RHEA-COMP:14527"/>
        <dbReference type="Rhea" id="RHEA-COMP:17342"/>
        <dbReference type="ChEBI" id="CHEBI:33019"/>
        <dbReference type="ChEBI" id="CHEBI:61557"/>
        <dbReference type="ChEBI" id="CHEBI:140395"/>
        <dbReference type="EC" id="2.7.7.6"/>
    </reaction>
</comment>
<comment type="cofactor">
    <cofactor evidence="1">
        <name>Mg(2+)</name>
        <dbReference type="ChEBI" id="CHEBI:18420"/>
    </cofactor>
    <text evidence="1">Binds 1 Mg(2+) ion per subunit.</text>
</comment>
<comment type="cofactor">
    <cofactor evidence="1">
        <name>Zn(2+)</name>
        <dbReference type="ChEBI" id="CHEBI:29105"/>
    </cofactor>
    <text evidence="2">Binds 1 Zn(2+) ion per subunit; 2 are expected compared to other organisms.</text>
</comment>
<comment type="subunit">
    <text evidence="1">The RNAP catalytic core consists of 2 alpha, 1 beta, 1 beta' and 1 omega subunit. When a sigma factor is associated with the core the holoenzyme is formed, which can initiate transcription.</text>
</comment>
<comment type="similarity">
    <text evidence="1">Belongs to the RNA polymerase beta' chain family.</text>
</comment>
<comment type="caution">
    <text evidence="2">The highly conserved N-terminal zinc-binding site of this subunit is not present in this sequence.</text>
</comment>
<accession>Q4A970</accession>
<evidence type="ECO:0000255" key="1">
    <source>
        <dbReference type="HAMAP-Rule" id="MF_01322"/>
    </source>
</evidence>
<evidence type="ECO:0000305" key="2"/>
<protein>
    <recommendedName>
        <fullName evidence="1">DNA-directed RNA polymerase subunit beta'</fullName>
        <shortName evidence="1">RNAP subunit beta'</shortName>
        <ecNumber evidence="1">2.7.7.6</ecNumber>
    </recommendedName>
    <alternativeName>
        <fullName evidence="1">RNA polymerase subunit beta'</fullName>
    </alternativeName>
    <alternativeName>
        <fullName evidence="1">Transcriptase subunit beta'</fullName>
    </alternativeName>
</protein>
<gene>
    <name evidence="1" type="primary">rpoC</name>
    <name type="ordered locus">MHJ_0617</name>
</gene>
<reference key="1">
    <citation type="journal article" date="2005" name="J. Bacteriol.">
        <title>Swine and poultry pathogens: the complete genome sequences of two strains of Mycoplasma hyopneumoniae and a strain of Mycoplasma synoviae.</title>
        <authorList>
            <person name="Vasconcelos A.T.R."/>
            <person name="Ferreira H.B."/>
            <person name="Bizarro C.V."/>
            <person name="Bonatto S.L."/>
            <person name="Carvalho M.O."/>
            <person name="Pinto P.M."/>
            <person name="Almeida D.F."/>
            <person name="Almeida L.G.P."/>
            <person name="Almeida R."/>
            <person name="Alves-Junior L."/>
            <person name="Assuncao E.N."/>
            <person name="Azevedo V.A.C."/>
            <person name="Bogo M.R."/>
            <person name="Brigido M.M."/>
            <person name="Brocchi M."/>
            <person name="Burity H.A."/>
            <person name="Camargo A.A."/>
            <person name="Camargo S.S."/>
            <person name="Carepo M.S."/>
            <person name="Carraro D.M."/>
            <person name="de Mattos Cascardo J.C."/>
            <person name="Castro L.A."/>
            <person name="Cavalcanti G."/>
            <person name="Chemale G."/>
            <person name="Collevatti R.G."/>
            <person name="Cunha C.W."/>
            <person name="Dallagiovanna B."/>
            <person name="Dambros B.P."/>
            <person name="Dellagostin O.A."/>
            <person name="Falcao C."/>
            <person name="Fantinatti-Garboggini F."/>
            <person name="Felipe M.S.S."/>
            <person name="Fiorentin L."/>
            <person name="Franco G.R."/>
            <person name="Freitas N.S.A."/>
            <person name="Frias D."/>
            <person name="Grangeiro T.B."/>
            <person name="Grisard E.C."/>
            <person name="Guimaraes C.T."/>
            <person name="Hungria M."/>
            <person name="Jardim S.N."/>
            <person name="Krieger M.A."/>
            <person name="Laurino J.P."/>
            <person name="Lima L.F.A."/>
            <person name="Lopes M.I."/>
            <person name="Loreto E.L.S."/>
            <person name="Madeira H.M.F."/>
            <person name="Manfio G.P."/>
            <person name="Maranhao A.Q."/>
            <person name="Martinkovics C.T."/>
            <person name="Medeiros S.R.B."/>
            <person name="Moreira M.A.M."/>
            <person name="Neiva M."/>
            <person name="Ramalho-Neto C.E."/>
            <person name="Nicolas M.F."/>
            <person name="Oliveira S.C."/>
            <person name="Paixao R.F.C."/>
            <person name="Pedrosa F.O."/>
            <person name="Pena S.D.J."/>
            <person name="Pereira M."/>
            <person name="Pereira-Ferrari L."/>
            <person name="Piffer I."/>
            <person name="Pinto L.S."/>
            <person name="Potrich D.P."/>
            <person name="Salim A.C.M."/>
            <person name="Santos F.R."/>
            <person name="Schmitt R."/>
            <person name="Schneider M.P.C."/>
            <person name="Schrank A."/>
            <person name="Schrank I.S."/>
            <person name="Schuck A.F."/>
            <person name="Seuanez H.N."/>
            <person name="Silva D.W."/>
            <person name="Silva R."/>
            <person name="Silva S.C."/>
            <person name="Soares C.M.A."/>
            <person name="Souza K.R.L."/>
            <person name="Souza R.C."/>
            <person name="Staats C.C."/>
            <person name="Steffens M.B.R."/>
            <person name="Teixeira S.M.R."/>
            <person name="Urmenyi T.P."/>
            <person name="Vainstein M.H."/>
            <person name="Zuccherato L.W."/>
            <person name="Simpson A.J.G."/>
            <person name="Zaha A."/>
        </authorList>
    </citation>
    <scope>NUCLEOTIDE SEQUENCE [LARGE SCALE GENOMIC DNA]</scope>
    <source>
        <strain>J / ATCC 25934 / NCTC 10110</strain>
    </source>
</reference>
<proteinExistence type="inferred from homology"/>
<feature type="chain" id="PRO_0000308864" description="DNA-directed RNA polymerase subunit beta'">
    <location>
        <begin position="1"/>
        <end position="1412"/>
    </location>
</feature>
<feature type="binding site" evidence="1">
    <location>
        <position position="543"/>
    </location>
    <ligand>
        <name>Mg(2+)</name>
        <dbReference type="ChEBI" id="CHEBI:18420"/>
    </ligand>
</feature>
<feature type="binding site" evidence="1">
    <location>
        <position position="545"/>
    </location>
    <ligand>
        <name>Mg(2+)</name>
        <dbReference type="ChEBI" id="CHEBI:18420"/>
    </ligand>
</feature>
<feature type="binding site" evidence="1">
    <location>
        <position position="547"/>
    </location>
    <ligand>
        <name>Mg(2+)</name>
        <dbReference type="ChEBI" id="CHEBI:18420"/>
    </ligand>
</feature>
<feature type="binding site" evidence="1">
    <location>
        <position position="1017"/>
    </location>
    <ligand>
        <name>Zn(2+)</name>
        <dbReference type="ChEBI" id="CHEBI:29105"/>
    </ligand>
</feature>
<feature type="binding site" evidence="1">
    <location>
        <position position="1092"/>
    </location>
    <ligand>
        <name>Zn(2+)</name>
        <dbReference type="ChEBI" id="CHEBI:29105"/>
    </ligand>
</feature>
<feature type="binding site" evidence="1">
    <location>
        <position position="1099"/>
    </location>
    <ligand>
        <name>Zn(2+)</name>
        <dbReference type="ChEBI" id="CHEBI:29105"/>
    </ligand>
</feature>
<feature type="binding site" evidence="1">
    <location>
        <position position="1102"/>
    </location>
    <ligand>
        <name>Zn(2+)</name>
        <dbReference type="ChEBI" id="CHEBI:29105"/>
    </ligand>
</feature>
<dbReference type="EC" id="2.7.7.6" evidence="1"/>
<dbReference type="EMBL" id="AE017243">
    <property type="protein sequence ID" value="AAZ44701.1"/>
    <property type="molecule type" value="Genomic_DNA"/>
</dbReference>
<dbReference type="RefSeq" id="WP_011284346.1">
    <property type="nucleotide sequence ID" value="NC_007295.1"/>
</dbReference>
<dbReference type="SMR" id="Q4A970"/>
<dbReference type="GeneID" id="41334919"/>
<dbReference type="KEGG" id="mhj:MHJ_0617"/>
<dbReference type="eggNOG" id="COG0086">
    <property type="taxonomic scope" value="Bacteria"/>
</dbReference>
<dbReference type="HOGENOM" id="CLU_000524_3_1_14"/>
<dbReference type="OrthoDB" id="9815296at2"/>
<dbReference type="Proteomes" id="UP000000548">
    <property type="component" value="Chromosome"/>
</dbReference>
<dbReference type="GO" id="GO:0000428">
    <property type="term" value="C:DNA-directed RNA polymerase complex"/>
    <property type="evidence" value="ECO:0007669"/>
    <property type="project" value="UniProtKB-KW"/>
</dbReference>
<dbReference type="GO" id="GO:0003677">
    <property type="term" value="F:DNA binding"/>
    <property type="evidence" value="ECO:0007669"/>
    <property type="project" value="UniProtKB-UniRule"/>
</dbReference>
<dbReference type="GO" id="GO:0003899">
    <property type="term" value="F:DNA-directed RNA polymerase activity"/>
    <property type="evidence" value="ECO:0007669"/>
    <property type="project" value="UniProtKB-UniRule"/>
</dbReference>
<dbReference type="GO" id="GO:0000287">
    <property type="term" value="F:magnesium ion binding"/>
    <property type="evidence" value="ECO:0007669"/>
    <property type="project" value="UniProtKB-UniRule"/>
</dbReference>
<dbReference type="GO" id="GO:0008270">
    <property type="term" value="F:zinc ion binding"/>
    <property type="evidence" value="ECO:0007669"/>
    <property type="project" value="UniProtKB-UniRule"/>
</dbReference>
<dbReference type="GO" id="GO:0006351">
    <property type="term" value="P:DNA-templated transcription"/>
    <property type="evidence" value="ECO:0007669"/>
    <property type="project" value="UniProtKB-UniRule"/>
</dbReference>
<dbReference type="CDD" id="cd02655">
    <property type="entry name" value="RNAP_beta'_C"/>
    <property type="match status" value="1"/>
</dbReference>
<dbReference type="Gene3D" id="1.10.132.30">
    <property type="match status" value="1"/>
</dbReference>
<dbReference type="Gene3D" id="1.10.150.390">
    <property type="match status" value="1"/>
</dbReference>
<dbReference type="Gene3D" id="1.10.1790.20">
    <property type="match status" value="1"/>
</dbReference>
<dbReference type="Gene3D" id="1.10.40.90">
    <property type="match status" value="1"/>
</dbReference>
<dbReference type="Gene3D" id="2.40.40.20">
    <property type="match status" value="1"/>
</dbReference>
<dbReference type="Gene3D" id="2.40.50.100">
    <property type="match status" value="1"/>
</dbReference>
<dbReference type="Gene3D" id="4.10.860.120">
    <property type="entry name" value="RNA polymerase II, clamp domain"/>
    <property type="match status" value="1"/>
</dbReference>
<dbReference type="Gene3D" id="1.10.274.100">
    <property type="entry name" value="RNA polymerase Rpb1, domain 3"/>
    <property type="match status" value="2"/>
</dbReference>
<dbReference type="HAMAP" id="MF_01322">
    <property type="entry name" value="RNApol_bact_RpoC"/>
    <property type="match status" value="1"/>
</dbReference>
<dbReference type="InterPro" id="IPR045867">
    <property type="entry name" value="DNA-dir_RpoC_beta_prime"/>
</dbReference>
<dbReference type="InterPro" id="IPR012754">
    <property type="entry name" value="DNA-dir_RpoC_beta_prime_bact"/>
</dbReference>
<dbReference type="InterPro" id="IPR000722">
    <property type="entry name" value="RNA_pol_asu"/>
</dbReference>
<dbReference type="InterPro" id="IPR006592">
    <property type="entry name" value="RNA_pol_N"/>
</dbReference>
<dbReference type="InterPro" id="IPR007080">
    <property type="entry name" value="RNA_pol_Rpb1_1"/>
</dbReference>
<dbReference type="InterPro" id="IPR007066">
    <property type="entry name" value="RNA_pol_Rpb1_3"/>
</dbReference>
<dbReference type="InterPro" id="IPR042102">
    <property type="entry name" value="RNA_pol_Rpb1_3_sf"/>
</dbReference>
<dbReference type="InterPro" id="IPR007083">
    <property type="entry name" value="RNA_pol_Rpb1_4"/>
</dbReference>
<dbReference type="InterPro" id="IPR007081">
    <property type="entry name" value="RNA_pol_Rpb1_5"/>
</dbReference>
<dbReference type="InterPro" id="IPR044893">
    <property type="entry name" value="RNA_pol_Rpb1_clamp_domain"/>
</dbReference>
<dbReference type="InterPro" id="IPR038120">
    <property type="entry name" value="Rpb1_funnel_sf"/>
</dbReference>
<dbReference type="NCBIfam" id="TIGR02386">
    <property type="entry name" value="rpoC_TIGR"/>
    <property type="match status" value="1"/>
</dbReference>
<dbReference type="PANTHER" id="PTHR19376">
    <property type="entry name" value="DNA-DIRECTED RNA POLYMERASE"/>
    <property type="match status" value="1"/>
</dbReference>
<dbReference type="PANTHER" id="PTHR19376:SF54">
    <property type="entry name" value="DNA-DIRECTED RNA POLYMERASE SUBUNIT BETA"/>
    <property type="match status" value="1"/>
</dbReference>
<dbReference type="Pfam" id="PF04997">
    <property type="entry name" value="RNA_pol_Rpb1_1"/>
    <property type="match status" value="1"/>
</dbReference>
<dbReference type="Pfam" id="PF00623">
    <property type="entry name" value="RNA_pol_Rpb1_2"/>
    <property type="match status" value="2"/>
</dbReference>
<dbReference type="Pfam" id="PF04983">
    <property type="entry name" value="RNA_pol_Rpb1_3"/>
    <property type="match status" value="1"/>
</dbReference>
<dbReference type="Pfam" id="PF05000">
    <property type="entry name" value="RNA_pol_Rpb1_4"/>
    <property type="match status" value="1"/>
</dbReference>
<dbReference type="Pfam" id="PF04998">
    <property type="entry name" value="RNA_pol_Rpb1_5"/>
    <property type="match status" value="1"/>
</dbReference>
<dbReference type="SMART" id="SM00663">
    <property type="entry name" value="RPOLA_N"/>
    <property type="match status" value="1"/>
</dbReference>
<dbReference type="SUPFAM" id="SSF64484">
    <property type="entry name" value="beta and beta-prime subunits of DNA dependent RNA-polymerase"/>
    <property type="match status" value="1"/>
</dbReference>